<comment type="function">
    <text evidence="1">One of the early assembly proteins it binds 23S rRNA. One of the proteins that surrounds the polypeptide exit tunnel on the outside of the ribosome. Forms the main docking site for trigger factor binding to the ribosome.</text>
</comment>
<comment type="subunit">
    <text evidence="1">Part of the 50S ribosomal subunit. Contacts protein L29, and trigger factor when it is bound to the ribosome.</text>
</comment>
<comment type="similarity">
    <text evidence="1">Belongs to the universal ribosomal protein uL23 family.</text>
</comment>
<organism>
    <name type="scientific">Lactobacillus gasseri (strain ATCC 33323 / DSM 20243 / BCRC 14619 / CIP 102991 / JCM 1131 / KCTC 3163 / NCIMB 11718 / NCTC 13722 / AM63)</name>
    <dbReference type="NCBI Taxonomy" id="324831"/>
    <lineage>
        <taxon>Bacteria</taxon>
        <taxon>Bacillati</taxon>
        <taxon>Bacillota</taxon>
        <taxon>Bacilli</taxon>
        <taxon>Lactobacillales</taxon>
        <taxon>Lactobacillaceae</taxon>
        <taxon>Lactobacillus</taxon>
    </lineage>
</organism>
<accession>Q046C3</accession>
<proteinExistence type="inferred from homology"/>
<name>RL23_LACGA</name>
<reference key="1">
    <citation type="journal article" date="2006" name="Proc. Natl. Acad. Sci. U.S.A.">
        <title>Comparative genomics of the lactic acid bacteria.</title>
        <authorList>
            <person name="Makarova K.S."/>
            <person name="Slesarev A."/>
            <person name="Wolf Y.I."/>
            <person name="Sorokin A."/>
            <person name="Mirkin B."/>
            <person name="Koonin E.V."/>
            <person name="Pavlov A."/>
            <person name="Pavlova N."/>
            <person name="Karamychev V."/>
            <person name="Polouchine N."/>
            <person name="Shakhova V."/>
            <person name="Grigoriev I."/>
            <person name="Lou Y."/>
            <person name="Rohksar D."/>
            <person name="Lucas S."/>
            <person name="Huang K."/>
            <person name="Goodstein D.M."/>
            <person name="Hawkins T."/>
            <person name="Plengvidhya V."/>
            <person name="Welker D."/>
            <person name="Hughes J."/>
            <person name="Goh Y."/>
            <person name="Benson A."/>
            <person name="Baldwin K."/>
            <person name="Lee J.-H."/>
            <person name="Diaz-Muniz I."/>
            <person name="Dosti B."/>
            <person name="Smeianov V."/>
            <person name="Wechter W."/>
            <person name="Barabote R."/>
            <person name="Lorca G."/>
            <person name="Altermann E."/>
            <person name="Barrangou R."/>
            <person name="Ganesan B."/>
            <person name="Xie Y."/>
            <person name="Rawsthorne H."/>
            <person name="Tamir D."/>
            <person name="Parker C."/>
            <person name="Breidt F."/>
            <person name="Broadbent J.R."/>
            <person name="Hutkins R."/>
            <person name="O'Sullivan D."/>
            <person name="Steele J."/>
            <person name="Unlu G."/>
            <person name="Saier M.H. Jr."/>
            <person name="Klaenhammer T."/>
            <person name="Richardson P."/>
            <person name="Kozyavkin S."/>
            <person name="Weimer B.C."/>
            <person name="Mills D.A."/>
        </authorList>
    </citation>
    <scope>NUCLEOTIDE SEQUENCE [LARGE SCALE GENOMIC DNA]</scope>
    <source>
        <strain>ATCC 33323 / DSM 20243 / BCRC 14619 / CIP 102991 / JCM 1131 / KCTC 3163 / NCIMB 11718 / NCTC 13722 / AM63</strain>
    </source>
</reference>
<dbReference type="EMBL" id="CP000413">
    <property type="protein sequence ID" value="ABJ59699.1"/>
    <property type="molecule type" value="Genomic_DNA"/>
</dbReference>
<dbReference type="RefSeq" id="WP_003647833.1">
    <property type="nucleotide sequence ID" value="NZ_WBMG01000001.1"/>
</dbReference>
<dbReference type="SMR" id="Q046C3"/>
<dbReference type="GeneID" id="48924304"/>
<dbReference type="KEGG" id="lga:LGAS_0293"/>
<dbReference type="HOGENOM" id="CLU_037562_3_2_9"/>
<dbReference type="BioCyc" id="LGAS324831:G1G6Y-291-MONOMER"/>
<dbReference type="Proteomes" id="UP000000664">
    <property type="component" value="Chromosome"/>
</dbReference>
<dbReference type="GO" id="GO:1990904">
    <property type="term" value="C:ribonucleoprotein complex"/>
    <property type="evidence" value="ECO:0007669"/>
    <property type="project" value="UniProtKB-KW"/>
</dbReference>
<dbReference type="GO" id="GO:0005840">
    <property type="term" value="C:ribosome"/>
    <property type="evidence" value="ECO:0007669"/>
    <property type="project" value="UniProtKB-KW"/>
</dbReference>
<dbReference type="GO" id="GO:0019843">
    <property type="term" value="F:rRNA binding"/>
    <property type="evidence" value="ECO:0007669"/>
    <property type="project" value="UniProtKB-UniRule"/>
</dbReference>
<dbReference type="GO" id="GO:0003735">
    <property type="term" value="F:structural constituent of ribosome"/>
    <property type="evidence" value="ECO:0007669"/>
    <property type="project" value="InterPro"/>
</dbReference>
<dbReference type="GO" id="GO:0006412">
    <property type="term" value="P:translation"/>
    <property type="evidence" value="ECO:0007669"/>
    <property type="project" value="UniProtKB-UniRule"/>
</dbReference>
<dbReference type="FunFam" id="3.30.70.330:FF:000001">
    <property type="entry name" value="50S ribosomal protein L23"/>
    <property type="match status" value="1"/>
</dbReference>
<dbReference type="Gene3D" id="3.30.70.330">
    <property type="match status" value="1"/>
</dbReference>
<dbReference type="HAMAP" id="MF_01369_B">
    <property type="entry name" value="Ribosomal_uL23_B"/>
    <property type="match status" value="1"/>
</dbReference>
<dbReference type="InterPro" id="IPR012677">
    <property type="entry name" value="Nucleotide-bd_a/b_plait_sf"/>
</dbReference>
<dbReference type="InterPro" id="IPR013025">
    <property type="entry name" value="Ribosomal_uL23-like"/>
</dbReference>
<dbReference type="InterPro" id="IPR012678">
    <property type="entry name" value="Ribosomal_uL23/eL15/eS24_sf"/>
</dbReference>
<dbReference type="InterPro" id="IPR001014">
    <property type="entry name" value="Ribosomal_uL23_CS"/>
</dbReference>
<dbReference type="NCBIfam" id="NF004363">
    <property type="entry name" value="PRK05738.2-4"/>
    <property type="match status" value="1"/>
</dbReference>
<dbReference type="PANTHER" id="PTHR11620">
    <property type="entry name" value="60S RIBOSOMAL PROTEIN L23A"/>
    <property type="match status" value="1"/>
</dbReference>
<dbReference type="Pfam" id="PF00276">
    <property type="entry name" value="Ribosomal_L23"/>
    <property type="match status" value="1"/>
</dbReference>
<dbReference type="SUPFAM" id="SSF54189">
    <property type="entry name" value="Ribosomal proteins S24e, L23 and L15e"/>
    <property type="match status" value="1"/>
</dbReference>
<dbReference type="PROSITE" id="PS00050">
    <property type="entry name" value="RIBOSOMAL_L23"/>
    <property type="match status" value="1"/>
</dbReference>
<gene>
    <name evidence="1" type="primary">rplW</name>
    <name type="ordered locus">LGAS_0293</name>
</gene>
<protein>
    <recommendedName>
        <fullName evidence="1">Large ribosomal subunit protein uL23</fullName>
    </recommendedName>
    <alternativeName>
        <fullName evidence="2">50S ribosomal protein L23</fullName>
    </alternativeName>
</protein>
<keyword id="KW-0687">Ribonucleoprotein</keyword>
<keyword id="KW-0689">Ribosomal protein</keyword>
<keyword id="KW-0694">RNA-binding</keyword>
<keyword id="KW-0699">rRNA-binding</keyword>
<evidence type="ECO:0000255" key="1">
    <source>
        <dbReference type="HAMAP-Rule" id="MF_01369"/>
    </source>
</evidence>
<evidence type="ECO:0000305" key="2"/>
<feature type="chain" id="PRO_1000068092" description="Large ribosomal subunit protein uL23">
    <location>
        <begin position="1"/>
        <end position="98"/>
    </location>
</feature>
<sequence>MDARDIILRPVVTEKSMNLMDDKKYTFDVLVSATKTQVRNAVEEIFDVKVKNVNIMNVRGKEKRVGRYTGKTARRRKAIVTLTEDSNDIKIFNDNKEN</sequence>